<gene>
    <name evidence="1" type="primary">nadK</name>
    <name type="ordered locus">TERTU_2444</name>
</gene>
<proteinExistence type="inferred from homology"/>
<accession>C5BL09</accession>
<comment type="function">
    <text evidence="1">Involved in the regulation of the intracellular balance of NAD and NADP, and is a key enzyme in the biosynthesis of NADP. Catalyzes specifically the phosphorylation on 2'-hydroxyl of the adenosine moiety of NAD to yield NADP.</text>
</comment>
<comment type="catalytic activity">
    <reaction evidence="1">
        <text>NAD(+) + ATP = ADP + NADP(+) + H(+)</text>
        <dbReference type="Rhea" id="RHEA:18629"/>
        <dbReference type="ChEBI" id="CHEBI:15378"/>
        <dbReference type="ChEBI" id="CHEBI:30616"/>
        <dbReference type="ChEBI" id="CHEBI:57540"/>
        <dbReference type="ChEBI" id="CHEBI:58349"/>
        <dbReference type="ChEBI" id="CHEBI:456216"/>
        <dbReference type="EC" id="2.7.1.23"/>
    </reaction>
</comment>
<comment type="cofactor">
    <cofactor evidence="1">
        <name>a divalent metal cation</name>
        <dbReference type="ChEBI" id="CHEBI:60240"/>
    </cofactor>
</comment>
<comment type="subcellular location">
    <subcellularLocation>
        <location evidence="1">Cytoplasm</location>
    </subcellularLocation>
</comment>
<comment type="similarity">
    <text evidence="1">Belongs to the NAD kinase family.</text>
</comment>
<name>NADK_TERTT</name>
<organism>
    <name type="scientific">Teredinibacter turnerae (strain ATCC 39867 / T7901)</name>
    <dbReference type="NCBI Taxonomy" id="377629"/>
    <lineage>
        <taxon>Bacteria</taxon>
        <taxon>Pseudomonadati</taxon>
        <taxon>Pseudomonadota</taxon>
        <taxon>Gammaproteobacteria</taxon>
        <taxon>Cellvibrionales</taxon>
        <taxon>Cellvibrionaceae</taxon>
        <taxon>Teredinibacter</taxon>
    </lineage>
</organism>
<reference key="1">
    <citation type="journal article" date="2009" name="PLoS ONE">
        <title>The complete genome of Teredinibacter turnerae T7901: an intracellular endosymbiont of marine wood-boring bivalves (shipworms).</title>
        <authorList>
            <person name="Yang J.C."/>
            <person name="Madupu R."/>
            <person name="Durkin A.S."/>
            <person name="Ekborg N.A."/>
            <person name="Pedamallu C.S."/>
            <person name="Hostetler J.B."/>
            <person name="Radune D."/>
            <person name="Toms B.S."/>
            <person name="Henrissat B."/>
            <person name="Coutinho P.M."/>
            <person name="Schwarz S."/>
            <person name="Field L."/>
            <person name="Trindade-Silva A.E."/>
            <person name="Soares C.A.G."/>
            <person name="Elshahawi S."/>
            <person name="Hanora A."/>
            <person name="Schmidt E.W."/>
            <person name="Haygood M.G."/>
            <person name="Posfai J."/>
            <person name="Benner J."/>
            <person name="Madinger C."/>
            <person name="Nove J."/>
            <person name="Anton B."/>
            <person name="Chaudhary K."/>
            <person name="Foster J."/>
            <person name="Holman A."/>
            <person name="Kumar S."/>
            <person name="Lessard P.A."/>
            <person name="Luyten Y.A."/>
            <person name="Slatko B."/>
            <person name="Wood N."/>
            <person name="Wu B."/>
            <person name="Teplitski M."/>
            <person name="Mougous J.D."/>
            <person name="Ward N."/>
            <person name="Eisen J.A."/>
            <person name="Badger J.H."/>
            <person name="Distel D.L."/>
        </authorList>
    </citation>
    <scope>NUCLEOTIDE SEQUENCE [LARGE SCALE GENOMIC DNA]</scope>
    <source>
        <strain>ATCC 39867 / T7901</strain>
    </source>
</reference>
<feature type="chain" id="PRO_1000205431" description="NAD kinase">
    <location>
        <begin position="1"/>
        <end position="293"/>
    </location>
</feature>
<feature type="active site" description="Proton acceptor" evidence="1">
    <location>
        <position position="72"/>
    </location>
</feature>
<feature type="binding site" evidence="1">
    <location>
        <begin position="72"/>
        <end position="73"/>
    </location>
    <ligand>
        <name>NAD(+)</name>
        <dbReference type="ChEBI" id="CHEBI:57540"/>
    </ligand>
</feature>
<feature type="binding site" evidence="1">
    <location>
        <begin position="146"/>
        <end position="147"/>
    </location>
    <ligand>
        <name>NAD(+)</name>
        <dbReference type="ChEBI" id="CHEBI:57540"/>
    </ligand>
</feature>
<feature type="binding site" evidence="1">
    <location>
        <position position="157"/>
    </location>
    <ligand>
        <name>NAD(+)</name>
        <dbReference type="ChEBI" id="CHEBI:57540"/>
    </ligand>
</feature>
<feature type="binding site" evidence="1">
    <location>
        <position position="174"/>
    </location>
    <ligand>
        <name>NAD(+)</name>
        <dbReference type="ChEBI" id="CHEBI:57540"/>
    </ligand>
</feature>
<feature type="binding site" evidence="1">
    <location>
        <position position="176"/>
    </location>
    <ligand>
        <name>NAD(+)</name>
        <dbReference type="ChEBI" id="CHEBI:57540"/>
    </ligand>
</feature>
<feature type="binding site" evidence="1">
    <location>
        <begin position="187"/>
        <end position="192"/>
    </location>
    <ligand>
        <name>NAD(+)</name>
        <dbReference type="ChEBI" id="CHEBI:57540"/>
    </ligand>
</feature>
<feature type="binding site" evidence="1">
    <location>
        <position position="247"/>
    </location>
    <ligand>
        <name>NAD(+)</name>
        <dbReference type="ChEBI" id="CHEBI:57540"/>
    </ligand>
</feature>
<keyword id="KW-0067">ATP-binding</keyword>
<keyword id="KW-0963">Cytoplasm</keyword>
<keyword id="KW-0418">Kinase</keyword>
<keyword id="KW-0520">NAD</keyword>
<keyword id="KW-0521">NADP</keyword>
<keyword id="KW-0547">Nucleotide-binding</keyword>
<keyword id="KW-1185">Reference proteome</keyword>
<keyword id="KW-0808">Transferase</keyword>
<sequence>MQSFNTIGLIGRLASASTQYSLKRLIAFLTDQKLEVLLDKETSTILPDCDLPVATRPELAQACDLIIVVGGDGSLLSAARAFAGHDVQILGINRGRLGFLTDISPEDIENKVGEVLSGRYLLEQRFLLESTLLRDDEVMSTGLALNDVVIHPGKLIRMIEFELYIDDEFVYRQRSDGLIISSPTGSTAYALSGGGPIMHPNLDAVVLVPLYPHTLSSRPIVVGGNSEIRLIVCENNNLNPLVTCDGQSQTMTQPGDTVFITKSEKRLKLIHPEGHNFYETCRSKLGWASHTGN</sequence>
<dbReference type="EC" id="2.7.1.23" evidence="1"/>
<dbReference type="EMBL" id="CP001614">
    <property type="protein sequence ID" value="ACR14005.1"/>
    <property type="molecule type" value="Genomic_DNA"/>
</dbReference>
<dbReference type="RefSeq" id="WP_015820120.1">
    <property type="nucleotide sequence ID" value="NC_012997.1"/>
</dbReference>
<dbReference type="SMR" id="C5BL09"/>
<dbReference type="STRING" id="377629.TERTU_2444"/>
<dbReference type="KEGG" id="ttu:TERTU_2444"/>
<dbReference type="eggNOG" id="COG0061">
    <property type="taxonomic scope" value="Bacteria"/>
</dbReference>
<dbReference type="HOGENOM" id="CLU_008831_0_1_6"/>
<dbReference type="OrthoDB" id="9774737at2"/>
<dbReference type="Proteomes" id="UP000009080">
    <property type="component" value="Chromosome"/>
</dbReference>
<dbReference type="GO" id="GO:0005737">
    <property type="term" value="C:cytoplasm"/>
    <property type="evidence" value="ECO:0007669"/>
    <property type="project" value="UniProtKB-SubCell"/>
</dbReference>
<dbReference type="GO" id="GO:0005524">
    <property type="term" value="F:ATP binding"/>
    <property type="evidence" value="ECO:0007669"/>
    <property type="project" value="UniProtKB-KW"/>
</dbReference>
<dbReference type="GO" id="GO:0046872">
    <property type="term" value="F:metal ion binding"/>
    <property type="evidence" value="ECO:0007669"/>
    <property type="project" value="UniProtKB-UniRule"/>
</dbReference>
<dbReference type="GO" id="GO:0051287">
    <property type="term" value="F:NAD binding"/>
    <property type="evidence" value="ECO:0007669"/>
    <property type="project" value="UniProtKB-ARBA"/>
</dbReference>
<dbReference type="GO" id="GO:0003951">
    <property type="term" value="F:NAD+ kinase activity"/>
    <property type="evidence" value="ECO:0007669"/>
    <property type="project" value="UniProtKB-UniRule"/>
</dbReference>
<dbReference type="GO" id="GO:0019674">
    <property type="term" value="P:NAD metabolic process"/>
    <property type="evidence" value="ECO:0007669"/>
    <property type="project" value="InterPro"/>
</dbReference>
<dbReference type="GO" id="GO:0006741">
    <property type="term" value="P:NADP biosynthetic process"/>
    <property type="evidence" value="ECO:0007669"/>
    <property type="project" value="UniProtKB-UniRule"/>
</dbReference>
<dbReference type="Gene3D" id="3.40.50.10330">
    <property type="entry name" value="Probable inorganic polyphosphate/atp-NAD kinase, domain 1"/>
    <property type="match status" value="1"/>
</dbReference>
<dbReference type="Gene3D" id="2.60.200.30">
    <property type="entry name" value="Probable inorganic polyphosphate/atp-NAD kinase, domain 2"/>
    <property type="match status" value="1"/>
</dbReference>
<dbReference type="HAMAP" id="MF_00361">
    <property type="entry name" value="NAD_kinase"/>
    <property type="match status" value="1"/>
</dbReference>
<dbReference type="InterPro" id="IPR017438">
    <property type="entry name" value="ATP-NAD_kinase_N"/>
</dbReference>
<dbReference type="InterPro" id="IPR017437">
    <property type="entry name" value="ATP-NAD_kinase_PpnK-typ_C"/>
</dbReference>
<dbReference type="InterPro" id="IPR016064">
    <property type="entry name" value="NAD/diacylglycerol_kinase_sf"/>
</dbReference>
<dbReference type="InterPro" id="IPR002504">
    <property type="entry name" value="NADK"/>
</dbReference>
<dbReference type="NCBIfam" id="NF002306">
    <property type="entry name" value="PRK01231.1"/>
    <property type="match status" value="1"/>
</dbReference>
<dbReference type="PANTHER" id="PTHR20275">
    <property type="entry name" value="NAD KINASE"/>
    <property type="match status" value="1"/>
</dbReference>
<dbReference type="PANTHER" id="PTHR20275:SF0">
    <property type="entry name" value="NAD KINASE"/>
    <property type="match status" value="1"/>
</dbReference>
<dbReference type="Pfam" id="PF01513">
    <property type="entry name" value="NAD_kinase"/>
    <property type="match status" value="1"/>
</dbReference>
<dbReference type="Pfam" id="PF20143">
    <property type="entry name" value="NAD_kinase_C"/>
    <property type="match status" value="1"/>
</dbReference>
<dbReference type="SUPFAM" id="SSF111331">
    <property type="entry name" value="NAD kinase/diacylglycerol kinase-like"/>
    <property type="match status" value="1"/>
</dbReference>
<protein>
    <recommendedName>
        <fullName evidence="1">NAD kinase</fullName>
        <ecNumber evidence="1">2.7.1.23</ecNumber>
    </recommendedName>
    <alternativeName>
        <fullName evidence="1">ATP-dependent NAD kinase</fullName>
    </alternativeName>
</protein>
<evidence type="ECO:0000255" key="1">
    <source>
        <dbReference type="HAMAP-Rule" id="MF_00361"/>
    </source>
</evidence>